<proteinExistence type="inferred from homology"/>
<keyword id="KW-0067">ATP-binding</keyword>
<keyword id="KW-0169">Cobalamin biosynthesis</keyword>
<keyword id="KW-0315">Glutamine amidotransferase</keyword>
<keyword id="KW-0436">Ligase</keyword>
<keyword id="KW-0460">Magnesium</keyword>
<keyword id="KW-0547">Nucleotide-binding</keyword>
<feature type="chain" id="PRO_1000002297" description="Cobyrinate a,c-diamide synthase">
    <location>
        <begin position="1"/>
        <end position="456"/>
    </location>
</feature>
<feature type="domain" description="GATase cobBQ-type" evidence="1">
    <location>
        <begin position="247"/>
        <end position="439"/>
    </location>
</feature>
<feature type="active site" description="Nucleophile" evidence="1">
    <location>
        <position position="330"/>
    </location>
</feature>
<feature type="site" description="Increases nucleophilicity of active site Cys" evidence="1">
    <location>
        <position position="431"/>
    </location>
</feature>
<evidence type="ECO:0000255" key="1">
    <source>
        <dbReference type="HAMAP-Rule" id="MF_00027"/>
    </source>
</evidence>
<reference key="1">
    <citation type="journal article" date="2007" name="Photosyn. Res.">
        <title>Complete nucleotide sequence of the freshwater unicellular cyanobacterium Synechococcus elongatus PCC 6301 chromosome: gene content and organization.</title>
        <authorList>
            <person name="Sugita C."/>
            <person name="Ogata K."/>
            <person name="Shikata M."/>
            <person name="Jikuya H."/>
            <person name="Takano J."/>
            <person name="Furumichi M."/>
            <person name="Kanehisa M."/>
            <person name="Omata T."/>
            <person name="Sugiura M."/>
            <person name="Sugita M."/>
        </authorList>
    </citation>
    <scope>NUCLEOTIDE SEQUENCE [LARGE SCALE GENOMIC DNA]</scope>
    <source>
        <strain>ATCC 27144 / PCC 6301 / SAUG 1402/1</strain>
    </source>
</reference>
<gene>
    <name evidence="1" type="primary">cbiA</name>
    <name type="synonym">cobB</name>
    <name type="ordered locus">syc2239_c</name>
</gene>
<sequence length="456" mass="50345">MALIIAGERSGVGKTTTTLTLLAALKARQASVQSFKVGPDYIDPMFHRFVTGRDCRNLDPILTDEDYVQHCFQQHSQTADYTLVEGVMGLFDGLTGKTDTASTAHIARILNLPILLVLNCSSTARSIAAIAYGYQNFDSRLKIAGLVLNRVGSDRHLELLKDALEPLEIPILGVLRRQDEIQIPDRHLGLIPTSELPHLQSVIDRLAVLGQQCFDWNRLEPLLSNSDLNSTAFKSTTPSISLKSSVPIAIARDRAFNFYYADNFDLLRAAGAELIEWSPLQDRQLPAGVQGLYLGGGFPEVFAAELSDNLLARQAVQTAITQGIPCYAECGGLMYLRQHIIDFEQTQYPMVGAIAATAQMGSRLTLGYREATAQQASPLLQKGQVVWGHEFHRSSLREPIAQPLFQLQNFDGSLHYGEGYSQPNLHASYLHLHFGGKPWLIQNFLQACQQATALSR</sequence>
<comment type="function">
    <text evidence="1">Catalyzes the ATP-dependent amidation of the two carboxylate groups at positions a and c of cobyrinate, using either L-glutamine or ammonia as the nitrogen source.</text>
</comment>
<comment type="catalytic activity">
    <reaction evidence="1">
        <text>cob(II)yrinate + 2 L-glutamine + 2 ATP + 2 H2O = cob(II)yrinate a,c diamide + 2 L-glutamate + 2 ADP + 2 phosphate + 2 H(+)</text>
        <dbReference type="Rhea" id="RHEA:26289"/>
        <dbReference type="ChEBI" id="CHEBI:15377"/>
        <dbReference type="ChEBI" id="CHEBI:15378"/>
        <dbReference type="ChEBI" id="CHEBI:29985"/>
        <dbReference type="ChEBI" id="CHEBI:30616"/>
        <dbReference type="ChEBI" id="CHEBI:43474"/>
        <dbReference type="ChEBI" id="CHEBI:58359"/>
        <dbReference type="ChEBI" id="CHEBI:58537"/>
        <dbReference type="ChEBI" id="CHEBI:58894"/>
        <dbReference type="ChEBI" id="CHEBI:456216"/>
        <dbReference type="EC" id="6.3.5.11"/>
    </reaction>
</comment>
<comment type="cofactor">
    <cofactor evidence="1">
        <name>Mg(2+)</name>
        <dbReference type="ChEBI" id="CHEBI:18420"/>
    </cofactor>
</comment>
<comment type="pathway">
    <text evidence="1">Cofactor biosynthesis; adenosylcobalamin biosynthesis; cob(II)yrinate a,c-diamide from sirohydrochlorin (anaerobic route): step 10/10.</text>
</comment>
<comment type="domain">
    <text evidence="1">Comprises of two domains. The C-terminal domain contains the binding site for glutamine and catalyzes the hydrolysis of this substrate to glutamate and ammonia. The N-terminal domain is anticipated to bind ATP and cobyrinate and catalyzes the ultimate synthesis of the diamide product. The ammonia produced via the glutaminase domain is probably translocated to the adjacent domain via a molecular tunnel, where it reacts with an activated intermediate.</text>
</comment>
<comment type="miscellaneous">
    <text evidence="1">The a and c carboxylates of cobyrinate are activated for nucleophilic attack via formation of a phosphorylated intermediate by ATP. CbiA catalyzes first the amidation of the c-carboxylate, and then that of the a-carboxylate.</text>
</comment>
<comment type="similarity">
    <text evidence="1">Belongs to the CobB/CbiA family.</text>
</comment>
<name>CBIA_SYNP6</name>
<organism>
    <name type="scientific">Synechococcus sp. (strain ATCC 27144 / PCC 6301 / SAUG 1402/1)</name>
    <name type="common">Anacystis nidulans</name>
    <dbReference type="NCBI Taxonomy" id="269084"/>
    <lineage>
        <taxon>Bacteria</taxon>
        <taxon>Bacillati</taxon>
        <taxon>Cyanobacteriota</taxon>
        <taxon>Cyanophyceae</taxon>
        <taxon>Synechococcales</taxon>
        <taxon>Synechococcaceae</taxon>
        <taxon>Synechococcus</taxon>
    </lineage>
</organism>
<protein>
    <recommendedName>
        <fullName evidence="1">Cobyrinate a,c-diamide synthase</fullName>
        <ecNumber evidence="1">6.3.5.11</ecNumber>
    </recommendedName>
    <alternativeName>
        <fullName evidence="1">Cobyrinic acid a,c-diamide synthetase</fullName>
    </alternativeName>
</protein>
<dbReference type="EC" id="6.3.5.11" evidence="1"/>
<dbReference type="EMBL" id="AP008231">
    <property type="protein sequence ID" value="BAD80429.1"/>
    <property type="molecule type" value="Genomic_DNA"/>
</dbReference>
<dbReference type="RefSeq" id="WP_011244549.1">
    <property type="nucleotide sequence ID" value="NC_006576.1"/>
</dbReference>
<dbReference type="SMR" id="Q5MZU1"/>
<dbReference type="DNASU" id="3197797"/>
<dbReference type="KEGG" id="syc:syc2239_c"/>
<dbReference type="eggNOG" id="COG1797">
    <property type="taxonomic scope" value="Bacteria"/>
</dbReference>
<dbReference type="UniPathway" id="UPA00148">
    <property type="reaction ID" value="UER00231"/>
</dbReference>
<dbReference type="Proteomes" id="UP000001175">
    <property type="component" value="Chromosome"/>
</dbReference>
<dbReference type="GO" id="GO:0005524">
    <property type="term" value="F:ATP binding"/>
    <property type="evidence" value="ECO:0007669"/>
    <property type="project" value="UniProtKB-UniRule"/>
</dbReference>
<dbReference type="GO" id="GO:0042242">
    <property type="term" value="F:cobyrinic acid a,c-diamide synthase activity"/>
    <property type="evidence" value="ECO:0007669"/>
    <property type="project" value="UniProtKB-UniRule"/>
</dbReference>
<dbReference type="GO" id="GO:0009236">
    <property type="term" value="P:cobalamin biosynthetic process"/>
    <property type="evidence" value="ECO:0007669"/>
    <property type="project" value="UniProtKB-UniRule"/>
</dbReference>
<dbReference type="CDD" id="cd05388">
    <property type="entry name" value="CobB_N"/>
    <property type="match status" value="1"/>
</dbReference>
<dbReference type="CDD" id="cd03130">
    <property type="entry name" value="GATase1_CobB"/>
    <property type="match status" value="1"/>
</dbReference>
<dbReference type="Gene3D" id="3.40.50.880">
    <property type="match status" value="1"/>
</dbReference>
<dbReference type="Gene3D" id="3.40.50.300">
    <property type="entry name" value="P-loop containing nucleotide triphosphate hydrolases"/>
    <property type="match status" value="1"/>
</dbReference>
<dbReference type="HAMAP" id="MF_00027">
    <property type="entry name" value="CobB_CbiA"/>
    <property type="match status" value="1"/>
</dbReference>
<dbReference type="InterPro" id="IPR004484">
    <property type="entry name" value="CbiA/CobB_synth"/>
</dbReference>
<dbReference type="InterPro" id="IPR029062">
    <property type="entry name" value="Class_I_gatase-like"/>
</dbReference>
<dbReference type="InterPro" id="IPR002586">
    <property type="entry name" value="CobQ/CobB/MinD/ParA_Nub-bd_dom"/>
</dbReference>
<dbReference type="InterPro" id="IPR011698">
    <property type="entry name" value="GATase_3"/>
</dbReference>
<dbReference type="InterPro" id="IPR027417">
    <property type="entry name" value="P-loop_NTPase"/>
</dbReference>
<dbReference type="NCBIfam" id="TIGR00379">
    <property type="entry name" value="cobB"/>
    <property type="match status" value="1"/>
</dbReference>
<dbReference type="NCBIfam" id="NF002204">
    <property type="entry name" value="PRK01077.1"/>
    <property type="match status" value="1"/>
</dbReference>
<dbReference type="PANTHER" id="PTHR43873">
    <property type="entry name" value="COBYRINATE A,C-DIAMIDE SYNTHASE"/>
    <property type="match status" value="1"/>
</dbReference>
<dbReference type="PANTHER" id="PTHR43873:SF1">
    <property type="entry name" value="COBYRINATE A,C-DIAMIDE SYNTHASE"/>
    <property type="match status" value="1"/>
</dbReference>
<dbReference type="Pfam" id="PF01656">
    <property type="entry name" value="CbiA"/>
    <property type="match status" value="1"/>
</dbReference>
<dbReference type="Pfam" id="PF07685">
    <property type="entry name" value="GATase_3"/>
    <property type="match status" value="1"/>
</dbReference>
<dbReference type="SUPFAM" id="SSF52317">
    <property type="entry name" value="Class I glutamine amidotransferase-like"/>
    <property type="match status" value="1"/>
</dbReference>
<dbReference type="SUPFAM" id="SSF52540">
    <property type="entry name" value="P-loop containing nucleoside triphosphate hydrolases"/>
    <property type="match status" value="1"/>
</dbReference>
<dbReference type="PROSITE" id="PS51274">
    <property type="entry name" value="GATASE_COBBQ"/>
    <property type="match status" value="1"/>
</dbReference>
<accession>Q5MZU1</accession>